<organism>
    <name type="scientific">Rickettsia typhi (strain ATCC VR-144 / Wilmington)</name>
    <dbReference type="NCBI Taxonomy" id="257363"/>
    <lineage>
        <taxon>Bacteria</taxon>
        <taxon>Pseudomonadati</taxon>
        <taxon>Pseudomonadota</taxon>
        <taxon>Alphaproteobacteria</taxon>
        <taxon>Rickettsiales</taxon>
        <taxon>Rickettsiaceae</taxon>
        <taxon>Rickettsieae</taxon>
        <taxon>Rickettsia</taxon>
        <taxon>typhus group</taxon>
    </lineage>
</organism>
<comment type="function">
    <text evidence="1">Catalyzes the attachment of tryptophan to tRNA(Trp).</text>
</comment>
<comment type="catalytic activity">
    <reaction evidence="1">
        <text>tRNA(Trp) + L-tryptophan + ATP = L-tryptophyl-tRNA(Trp) + AMP + diphosphate + H(+)</text>
        <dbReference type="Rhea" id="RHEA:24080"/>
        <dbReference type="Rhea" id="RHEA-COMP:9671"/>
        <dbReference type="Rhea" id="RHEA-COMP:9705"/>
        <dbReference type="ChEBI" id="CHEBI:15378"/>
        <dbReference type="ChEBI" id="CHEBI:30616"/>
        <dbReference type="ChEBI" id="CHEBI:33019"/>
        <dbReference type="ChEBI" id="CHEBI:57912"/>
        <dbReference type="ChEBI" id="CHEBI:78442"/>
        <dbReference type="ChEBI" id="CHEBI:78535"/>
        <dbReference type="ChEBI" id="CHEBI:456215"/>
        <dbReference type="EC" id="6.1.1.2"/>
    </reaction>
</comment>
<comment type="subunit">
    <text evidence="1">Homodimer.</text>
</comment>
<comment type="subcellular location">
    <subcellularLocation>
        <location evidence="1">Cytoplasm</location>
    </subcellularLocation>
</comment>
<comment type="similarity">
    <text evidence="1">Belongs to the class-I aminoacyl-tRNA synthetase family.</text>
</comment>
<feature type="chain" id="PRO_0000274852" description="Tryptophan--tRNA ligase">
    <location>
        <begin position="1"/>
        <end position="330"/>
    </location>
</feature>
<feature type="short sequence motif" description="'HIGH' region" evidence="1">
    <location>
        <begin position="11"/>
        <end position="19"/>
    </location>
</feature>
<feature type="short sequence motif" description="'KMSKS' region" evidence="1">
    <location>
        <begin position="195"/>
        <end position="199"/>
    </location>
</feature>
<feature type="binding site" evidence="1">
    <location>
        <begin position="10"/>
        <end position="12"/>
    </location>
    <ligand>
        <name>ATP</name>
        <dbReference type="ChEBI" id="CHEBI:30616"/>
    </ligand>
</feature>
<feature type="binding site" evidence="1">
    <location>
        <begin position="18"/>
        <end position="19"/>
    </location>
    <ligand>
        <name>ATP</name>
        <dbReference type="ChEBI" id="CHEBI:30616"/>
    </ligand>
</feature>
<feature type="binding site" evidence="1">
    <location>
        <position position="134"/>
    </location>
    <ligand>
        <name>L-tryptophan</name>
        <dbReference type="ChEBI" id="CHEBI:57912"/>
    </ligand>
</feature>
<feature type="binding site" evidence="1">
    <location>
        <begin position="146"/>
        <end position="148"/>
    </location>
    <ligand>
        <name>ATP</name>
        <dbReference type="ChEBI" id="CHEBI:30616"/>
    </ligand>
</feature>
<feature type="binding site" evidence="1">
    <location>
        <position position="186"/>
    </location>
    <ligand>
        <name>ATP</name>
        <dbReference type="ChEBI" id="CHEBI:30616"/>
    </ligand>
</feature>
<feature type="binding site" evidence="1">
    <location>
        <begin position="195"/>
        <end position="199"/>
    </location>
    <ligand>
        <name>ATP</name>
        <dbReference type="ChEBI" id="CHEBI:30616"/>
    </ligand>
</feature>
<gene>
    <name evidence="1" type="primary">trpS</name>
    <name type="ordered locus">RT0455</name>
</gene>
<protein>
    <recommendedName>
        <fullName evidence="1">Tryptophan--tRNA ligase</fullName>
        <ecNumber evidence="1">6.1.1.2</ecNumber>
    </recommendedName>
    <alternativeName>
        <fullName evidence="1">Tryptophanyl-tRNA synthetase</fullName>
        <shortName evidence="1">TrpRS</shortName>
    </alternativeName>
</protein>
<sequence length="330" mass="37661">MKKTVLSGVQTTGALHLGNYLGSIKNWVKMQEEYNCFFFLADLHAITIDIKTSELNNSIMEVLAIYLAAGLNPDKVTIFAQSMVKEHAELSWLLNCVTPLGWLKRMTQFKDKAGSDQCKACLGLFAYPILMAADILIYKADIVPVGEDQKQHLELTRDIAEVINRRFDKEILKVPDILISETGTRIMSLRNGLKKMSKSDIADFSRINLKDSNDLIYQKIKKAKTDHLSFISYDKKTRPEISNLLDIYKSLSKESMEKIINNYQNQGFAKFKEDLAEIIITNLQPIRDKCLELMNDKEYLLKILHKGAEKAKIRASETVNEVKKQFGFII</sequence>
<accession>Q68WR2</accession>
<keyword id="KW-0030">Aminoacyl-tRNA synthetase</keyword>
<keyword id="KW-0067">ATP-binding</keyword>
<keyword id="KW-0963">Cytoplasm</keyword>
<keyword id="KW-0436">Ligase</keyword>
<keyword id="KW-0547">Nucleotide-binding</keyword>
<keyword id="KW-0648">Protein biosynthesis</keyword>
<proteinExistence type="inferred from homology"/>
<reference key="1">
    <citation type="journal article" date="2004" name="J. Bacteriol.">
        <title>Complete genome sequence of Rickettsia typhi and comparison with sequences of other Rickettsiae.</title>
        <authorList>
            <person name="McLeod M.P."/>
            <person name="Qin X."/>
            <person name="Karpathy S.E."/>
            <person name="Gioia J."/>
            <person name="Highlander S.K."/>
            <person name="Fox G.E."/>
            <person name="McNeill T.Z."/>
            <person name="Jiang H."/>
            <person name="Muzny D."/>
            <person name="Jacob L.S."/>
            <person name="Hawes A.C."/>
            <person name="Sodergren E."/>
            <person name="Gill R."/>
            <person name="Hume J."/>
            <person name="Morgan M."/>
            <person name="Fan G."/>
            <person name="Amin A.G."/>
            <person name="Gibbs R.A."/>
            <person name="Hong C."/>
            <person name="Yu X.-J."/>
            <person name="Walker D.H."/>
            <person name="Weinstock G.M."/>
        </authorList>
    </citation>
    <scope>NUCLEOTIDE SEQUENCE [LARGE SCALE GENOMIC DNA]</scope>
    <source>
        <strain>ATCC VR-144 / Wilmington</strain>
    </source>
</reference>
<evidence type="ECO:0000255" key="1">
    <source>
        <dbReference type="HAMAP-Rule" id="MF_00140"/>
    </source>
</evidence>
<name>SYW_RICTY</name>
<dbReference type="EC" id="6.1.1.2" evidence="1"/>
<dbReference type="EMBL" id="AE017197">
    <property type="protein sequence ID" value="AAU03930.1"/>
    <property type="molecule type" value="Genomic_DNA"/>
</dbReference>
<dbReference type="RefSeq" id="WP_011190913.1">
    <property type="nucleotide sequence ID" value="NC_006142.1"/>
</dbReference>
<dbReference type="SMR" id="Q68WR2"/>
<dbReference type="KEGG" id="rty:RT0455"/>
<dbReference type="eggNOG" id="COG0180">
    <property type="taxonomic scope" value="Bacteria"/>
</dbReference>
<dbReference type="HOGENOM" id="CLU_029244_1_4_5"/>
<dbReference type="OrthoDB" id="9801042at2"/>
<dbReference type="Proteomes" id="UP000000604">
    <property type="component" value="Chromosome"/>
</dbReference>
<dbReference type="GO" id="GO:0005737">
    <property type="term" value="C:cytoplasm"/>
    <property type="evidence" value="ECO:0007669"/>
    <property type="project" value="UniProtKB-SubCell"/>
</dbReference>
<dbReference type="GO" id="GO:0005524">
    <property type="term" value="F:ATP binding"/>
    <property type="evidence" value="ECO:0007669"/>
    <property type="project" value="UniProtKB-UniRule"/>
</dbReference>
<dbReference type="GO" id="GO:0004830">
    <property type="term" value="F:tryptophan-tRNA ligase activity"/>
    <property type="evidence" value="ECO:0007669"/>
    <property type="project" value="UniProtKB-UniRule"/>
</dbReference>
<dbReference type="GO" id="GO:0006436">
    <property type="term" value="P:tryptophanyl-tRNA aminoacylation"/>
    <property type="evidence" value="ECO:0007669"/>
    <property type="project" value="UniProtKB-UniRule"/>
</dbReference>
<dbReference type="CDD" id="cd00806">
    <property type="entry name" value="TrpRS_core"/>
    <property type="match status" value="1"/>
</dbReference>
<dbReference type="FunFam" id="1.10.240.10:FF:000002">
    <property type="entry name" value="Tryptophan--tRNA ligase"/>
    <property type="match status" value="1"/>
</dbReference>
<dbReference type="Gene3D" id="3.40.50.620">
    <property type="entry name" value="HUPs"/>
    <property type="match status" value="1"/>
</dbReference>
<dbReference type="Gene3D" id="1.10.240.10">
    <property type="entry name" value="Tyrosyl-Transfer RNA Synthetase"/>
    <property type="match status" value="1"/>
</dbReference>
<dbReference type="HAMAP" id="MF_00140_B">
    <property type="entry name" value="Trp_tRNA_synth_B"/>
    <property type="match status" value="1"/>
</dbReference>
<dbReference type="InterPro" id="IPR002305">
    <property type="entry name" value="aa-tRNA-synth_Ic"/>
</dbReference>
<dbReference type="InterPro" id="IPR014729">
    <property type="entry name" value="Rossmann-like_a/b/a_fold"/>
</dbReference>
<dbReference type="InterPro" id="IPR002306">
    <property type="entry name" value="Trp-tRNA-ligase"/>
</dbReference>
<dbReference type="InterPro" id="IPR024109">
    <property type="entry name" value="Trp-tRNA-ligase_bac-type"/>
</dbReference>
<dbReference type="InterPro" id="IPR050203">
    <property type="entry name" value="Trp-tRNA_synthetase"/>
</dbReference>
<dbReference type="NCBIfam" id="TIGR00233">
    <property type="entry name" value="trpS"/>
    <property type="match status" value="1"/>
</dbReference>
<dbReference type="PANTHER" id="PTHR43766">
    <property type="entry name" value="TRYPTOPHAN--TRNA LIGASE, MITOCHONDRIAL"/>
    <property type="match status" value="1"/>
</dbReference>
<dbReference type="PANTHER" id="PTHR43766:SF1">
    <property type="entry name" value="TRYPTOPHAN--TRNA LIGASE, MITOCHONDRIAL"/>
    <property type="match status" value="1"/>
</dbReference>
<dbReference type="Pfam" id="PF00579">
    <property type="entry name" value="tRNA-synt_1b"/>
    <property type="match status" value="1"/>
</dbReference>
<dbReference type="PRINTS" id="PR01039">
    <property type="entry name" value="TRNASYNTHTRP"/>
</dbReference>
<dbReference type="SUPFAM" id="SSF52374">
    <property type="entry name" value="Nucleotidylyl transferase"/>
    <property type="match status" value="1"/>
</dbReference>